<comment type="catalytic activity">
    <reaction evidence="1">
        <text>tRNA(Cys) + L-cysteine + ATP = L-cysteinyl-tRNA(Cys) + AMP + diphosphate</text>
        <dbReference type="Rhea" id="RHEA:17773"/>
        <dbReference type="Rhea" id="RHEA-COMP:9661"/>
        <dbReference type="Rhea" id="RHEA-COMP:9679"/>
        <dbReference type="ChEBI" id="CHEBI:30616"/>
        <dbReference type="ChEBI" id="CHEBI:33019"/>
        <dbReference type="ChEBI" id="CHEBI:35235"/>
        <dbReference type="ChEBI" id="CHEBI:78442"/>
        <dbReference type="ChEBI" id="CHEBI:78517"/>
        <dbReference type="ChEBI" id="CHEBI:456215"/>
        <dbReference type="EC" id="6.1.1.16"/>
    </reaction>
</comment>
<comment type="cofactor">
    <cofactor evidence="1">
        <name>Zn(2+)</name>
        <dbReference type="ChEBI" id="CHEBI:29105"/>
    </cofactor>
    <text evidence="1">Binds 1 zinc ion per subunit.</text>
</comment>
<comment type="subunit">
    <text evidence="1">Monomer.</text>
</comment>
<comment type="subcellular location">
    <subcellularLocation>
        <location evidence="1">Cytoplasm</location>
    </subcellularLocation>
</comment>
<comment type="similarity">
    <text evidence="1">Belongs to the class-I aminoacyl-tRNA synthetase family.</text>
</comment>
<reference key="1">
    <citation type="journal article" date="2007" name="ISME J.">
        <title>Population level functional diversity in a microbial community revealed by comparative genomic and metagenomic analyses.</title>
        <authorList>
            <person name="Bhaya D."/>
            <person name="Grossman A.R."/>
            <person name="Steunou A.-S."/>
            <person name="Khuri N."/>
            <person name="Cohan F.M."/>
            <person name="Hamamura N."/>
            <person name="Melendrez M.C."/>
            <person name="Bateson M.M."/>
            <person name="Ward D.M."/>
            <person name="Heidelberg J.F."/>
        </authorList>
    </citation>
    <scope>NUCLEOTIDE SEQUENCE [LARGE SCALE GENOMIC DNA]</scope>
    <source>
        <strain>JA-2-3B'a(2-13)</strain>
    </source>
</reference>
<keyword id="KW-0030">Aminoacyl-tRNA synthetase</keyword>
<keyword id="KW-0067">ATP-binding</keyword>
<keyword id="KW-0963">Cytoplasm</keyword>
<keyword id="KW-0436">Ligase</keyword>
<keyword id="KW-0479">Metal-binding</keyword>
<keyword id="KW-0547">Nucleotide-binding</keyword>
<keyword id="KW-0648">Protein biosynthesis</keyword>
<keyword id="KW-1185">Reference proteome</keyword>
<keyword id="KW-0862">Zinc</keyword>
<proteinExistence type="inferred from homology"/>
<accession>Q2JKL2</accession>
<gene>
    <name evidence="1" type="primary">cysS</name>
    <name type="ordered locus">CYB_1821</name>
</gene>
<dbReference type="EC" id="6.1.1.16" evidence="1"/>
<dbReference type="EMBL" id="CP000240">
    <property type="protein sequence ID" value="ABD02777.1"/>
    <property type="molecule type" value="Genomic_DNA"/>
</dbReference>
<dbReference type="SMR" id="Q2JKL2"/>
<dbReference type="STRING" id="321332.CYB_1821"/>
<dbReference type="KEGG" id="cyb:CYB_1821"/>
<dbReference type="eggNOG" id="COG0215">
    <property type="taxonomic scope" value="Bacteria"/>
</dbReference>
<dbReference type="HOGENOM" id="CLU_013528_0_1_3"/>
<dbReference type="Proteomes" id="UP000001938">
    <property type="component" value="Chromosome"/>
</dbReference>
<dbReference type="GO" id="GO:0005829">
    <property type="term" value="C:cytosol"/>
    <property type="evidence" value="ECO:0007669"/>
    <property type="project" value="TreeGrafter"/>
</dbReference>
<dbReference type="GO" id="GO:0005524">
    <property type="term" value="F:ATP binding"/>
    <property type="evidence" value="ECO:0007669"/>
    <property type="project" value="UniProtKB-UniRule"/>
</dbReference>
<dbReference type="GO" id="GO:0004817">
    <property type="term" value="F:cysteine-tRNA ligase activity"/>
    <property type="evidence" value="ECO:0007669"/>
    <property type="project" value="UniProtKB-UniRule"/>
</dbReference>
<dbReference type="GO" id="GO:0008270">
    <property type="term" value="F:zinc ion binding"/>
    <property type="evidence" value="ECO:0007669"/>
    <property type="project" value="UniProtKB-UniRule"/>
</dbReference>
<dbReference type="GO" id="GO:0006423">
    <property type="term" value="P:cysteinyl-tRNA aminoacylation"/>
    <property type="evidence" value="ECO:0007669"/>
    <property type="project" value="UniProtKB-UniRule"/>
</dbReference>
<dbReference type="CDD" id="cd00672">
    <property type="entry name" value="CysRS_core"/>
    <property type="match status" value="1"/>
</dbReference>
<dbReference type="Gene3D" id="1.20.120.1910">
    <property type="entry name" value="Cysteine-tRNA ligase, C-terminal anti-codon recognition domain"/>
    <property type="match status" value="1"/>
</dbReference>
<dbReference type="Gene3D" id="3.40.50.620">
    <property type="entry name" value="HUPs"/>
    <property type="match status" value="1"/>
</dbReference>
<dbReference type="HAMAP" id="MF_00041">
    <property type="entry name" value="Cys_tRNA_synth"/>
    <property type="match status" value="1"/>
</dbReference>
<dbReference type="InterPro" id="IPR015803">
    <property type="entry name" value="Cys-tRNA-ligase"/>
</dbReference>
<dbReference type="InterPro" id="IPR015273">
    <property type="entry name" value="Cys-tRNA-synt_Ia_DALR"/>
</dbReference>
<dbReference type="InterPro" id="IPR024909">
    <property type="entry name" value="Cys-tRNA/MSH_ligase"/>
</dbReference>
<dbReference type="InterPro" id="IPR056411">
    <property type="entry name" value="CysS_C"/>
</dbReference>
<dbReference type="InterPro" id="IPR014729">
    <property type="entry name" value="Rossmann-like_a/b/a_fold"/>
</dbReference>
<dbReference type="InterPro" id="IPR032678">
    <property type="entry name" value="tRNA-synt_1_cat_dom"/>
</dbReference>
<dbReference type="InterPro" id="IPR009080">
    <property type="entry name" value="tRNAsynth_Ia_anticodon-bd"/>
</dbReference>
<dbReference type="NCBIfam" id="TIGR00435">
    <property type="entry name" value="cysS"/>
    <property type="match status" value="1"/>
</dbReference>
<dbReference type="PANTHER" id="PTHR10890:SF3">
    <property type="entry name" value="CYSTEINE--TRNA LIGASE, CYTOPLASMIC"/>
    <property type="match status" value="1"/>
</dbReference>
<dbReference type="PANTHER" id="PTHR10890">
    <property type="entry name" value="CYSTEINYL-TRNA SYNTHETASE"/>
    <property type="match status" value="1"/>
</dbReference>
<dbReference type="Pfam" id="PF23493">
    <property type="entry name" value="CysS_C"/>
    <property type="match status" value="1"/>
</dbReference>
<dbReference type="Pfam" id="PF09190">
    <property type="entry name" value="DALR_2"/>
    <property type="match status" value="1"/>
</dbReference>
<dbReference type="Pfam" id="PF01406">
    <property type="entry name" value="tRNA-synt_1e"/>
    <property type="match status" value="1"/>
</dbReference>
<dbReference type="PRINTS" id="PR00983">
    <property type="entry name" value="TRNASYNTHCYS"/>
</dbReference>
<dbReference type="SMART" id="SM00840">
    <property type="entry name" value="DALR_2"/>
    <property type="match status" value="1"/>
</dbReference>
<dbReference type="SUPFAM" id="SSF47323">
    <property type="entry name" value="Anticodon-binding domain of a subclass of class I aminoacyl-tRNA synthetases"/>
    <property type="match status" value="1"/>
</dbReference>
<dbReference type="SUPFAM" id="SSF52374">
    <property type="entry name" value="Nucleotidylyl transferase"/>
    <property type="match status" value="1"/>
</dbReference>
<feature type="chain" id="PRO_0000240966" description="Cysteine--tRNA ligase">
    <location>
        <begin position="1"/>
        <end position="525"/>
    </location>
</feature>
<feature type="short sequence motif" description="'HIGH' region">
    <location>
        <begin position="51"/>
        <end position="61"/>
    </location>
</feature>
<feature type="short sequence motif" description="'KMSKS' region">
    <location>
        <begin position="315"/>
        <end position="319"/>
    </location>
</feature>
<feature type="binding site" evidence="1">
    <location>
        <position position="49"/>
    </location>
    <ligand>
        <name>Zn(2+)</name>
        <dbReference type="ChEBI" id="CHEBI:29105"/>
    </ligand>
</feature>
<feature type="binding site" evidence="1">
    <location>
        <position position="258"/>
    </location>
    <ligand>
        <name>Zn(2+)</name>
        <dbReference type="ChEBI" id="CHEBI:29105"/>
    </ligand>
</feature>
<feature type="binding site" evidence="1">
    <location>
        <position position="283"/>
    </location>
    <ligand>
        <name>Zn(2+)</name>
        <dbReference type="ChEBI" id="CHEBI:29105"/>
    </ligand>
</feature>
<feature type="binding site" evidence="1">
    <location>
        <position position="287"/>
    </location>
    <ligand>
        <name>Zn(2+)</name>
        <dbReference type="ChEBI" id="CHEBI:29105"/>
    </ligand>
</feature>
<feature type="binding site" evidence="1">
    <location>
        <position position="318"/>
    </location>
    <ligand>
        <name>ATP</name>
        <dbReference type="ChEBI" id="CHEBI:30616"/>
    </ligand>
</feature>
<protein>
    <recommendedName>
        <fullName evidence="1">Cysteine--tRNA ligase</fullName>
        <ecNumber evidence="1">6.1.1.16</ecNumber>
    </recommendedName>
    <alternativeName>
        <fullName evidence="1">Cysteinyl-tRNA synthetase</fullName>
        <shortName evidence="1">CysRS</shortName>
    </alternativeName>
</protein>
<organism>
    <name type="scientific">Synechococcus sp. (strain JA-2-3B'a(2-13))</name>
    <name type="common">Cyanobacteria bacterium Yellowstone B-Prime</name>
    <dbReference type="NCBI Taxonomy" id="321332"/>
    <lineage>
        <taxon>Bacteria</taxon>
        <taxon>Bacillati</taxon>
        <taxon>Cyanobacteriota</taxon>
        <taxon>Cyanophyceae</taxon>
        <taxon>Synechococcales</taxon>
        <taxon>Synechococcaceae</taxon>
        <taxon>Synechococcus</taxon>
    </lineage>
</organism>
<sequence>MVVYNTLTRRKEVFQPLAAGGSQSVSVGNSQGSAAPVAEEKPLVRMYVCGVTVYDLCHLGHARTYVVWDMVRRYLEWRGYRVKYVQNFTDVDDKILKRALERGESMQAVAERFIAEYFRDMDCLNIKRADFYPRATQSLQAMFQLIQSLELKGFAYRVRDPIRHQTDQSSLLQAGHQPETPASVQYSVYYSVRKFPDYGQLSGRKLEEMEAGASGRVGEEGAEKQDPFDFALWKAAPPSEPGFASPWGWGRPGWHIECSAMVRETLGDHIDIHAGGADLIFPHHENELAQSEPITGKPMAKYWMHNGFLNINGEKMSKSLGNFTTLRQALAVYHPMALRLFLLQTHYRSPIDLTEAAMQAASRGWETLQKGIHCAQHFCKEEKGSPDAEAMQAFQAAMDNDFGTPEALAIAFELAKELTREHNLFTHQGQTHLEPQALKQKSAALLEILATLGFCWPSFSEFEGSKEAATNGELNFKKIEELIAQRSAARKAKNFSEADRIRDQLKALGITLIDQKDGTTRWLRE</sequence>
<name>SYC_SYNJB</name>
<evidence type="ECO:0000255" key="1">
    <source>
        <dbReference type="HAMAP-Rule" id="MF_00041"/>
    </source>
</evidence>